<protein>
    <recommendedName>
        <fullName evidence="1">Integration host factor subunit alpha</fullName>
        <shortName evidence="1">IHF-alpha</shortName>
    </recommendedName>
</protein>
<gene>
    <name evidence="1" type="primary">ihfA</name>
    <name evidence="1" type="synonym">himA</name>
    <name type="ordered locus">BMEA_A0816</name>
</gene>
<keyword id="KW-0233">DNA recombination</keyword>
<keyword id="KW-0238">DNA-binding</keyword>
<keyword id="KW-0804">Transcription</keyword>
<keyword id="KW-0805">Transcription regulation</keyword>
<keyword id="KW-0810">Translation regulation</keyword>
<feature type="chain" id="PRO_1000190418" description="Integration host factor subunit alpha">
    <location>
        <begin position="1"/>
        <end position="107"/>
    </location>
</feature>
<organism>
    <name type="scientific">Brucella melitensis biotype 2 (strain ATCC 23457)</name>
    <dbReference type="NCBI Taxonomy" id="546272"/>
    <lineage>
        <taxon>Bacteria</taxon>
        <taxon>Pseudomonadati</taxon>
        <taxon>Pseudomonadota</taxon>
        <taxon>Alphaproteobacteria</taxon>
        <taxon>Hyphomicrobiales</taxon>
        <taxon>Brucellaceae</taxon>
        <taxon>Brucella/Ochrobactrum group</taxon>
        <taxon>Brucella</taxon>
    </lineage>
</organism>
<accession>C0RIB4</accession>
<dbReference type="EMBL" id="CP001488">
    <property type="protein sequence ID" value="ACO00572.1"/>
    <property type="molecule type" value="Genomic_DNA"/>
</dbReference>
<dbReference type="RefSeq" id="WP_002963914.1">
    <property type="nucleotide sequence ID" value="NC_012441.1"/>
</dbReference>
<dbReference type="SMR" id="C0RIB4"/>
<dbReference type="KEGG" id="bmi:BMEA_A0816"/>
<dbReference type="HOGENOM" id="CLU_105066_1_1_5"/>
<dbReference type="Proteomes" id="UP000001748">
    <property type="component" value="Chromosome I"/>
</dbReference>
<dbReference type="GO" id="GO:0005829">
    <property type="term" value="C:cytosol"/>
    <property type="evidence" value="ECO:0007669"/>
    <property type="project" value="TreeGrafter"/>
</dbReference>
<dbReference type="GO" id="GO:0003677">
    <property type="term" value="F:DNA binding"/>
    <property type="evidence" value="ECO:0007669"/>
    <property type="project" value="UniProtKB-UniRule"/>
</dbReference>
<dbReference type="GO" id="GO:0030527">
    <property type="term" value="F:structural constituent of chromatin"/>
    <property type="evidence" value="ECO:0007669"/>
    <property type="project" value="InterPro"/>
</dbReference>
<dbReference type="GO" id="GO:0006310">
    <property type="term" value="P:DNA recombination"/>
    <property type="evidence" value="ECO:0007669"/>
    <property type="project" value="UniProtKB-UniRule"/>
</dbReference>
<dbReference type="GO" id="GO:0009893">
    <property type="term" value="P:positive regulation of metabolic process"/>
    <property type="evidence" value="ECO:0007669"/>
    <property type="project" value="UniProtKB-ARBA"/>
</dbReference>
<dbReference type="GO" id="GO:0006355">
    <property type="term" value="P:regulation of DNA-templated transcription"/>
    <property type="evidence" value="ECO:0007669"/>
    <property type="project" value="UniProtKB-UniRule"/>
</dbReference>
<dbReference type="GO" id="GO:0006417">
    <property type="term" value="P:regulation of translation"/>
    <property type="evidence" value="ECO:0007669"/>
    <property type="project" value="UniProtKB-UniRule"/>
</dbReference>
<dbReference type="CDD" id="cd13835">
    <property type="entry name" value="IHF_A"/>
    <property type="match status" value="1"/>
</dbReference>
<dbReference type="Gene3D" id="4.10.520.10">
    <property type="entry name" value="IHF-like DNA-binding proteins"/>
    <property type="match status" value="1"/>
</dbReference>
<dbReference type="HAMAP" id="MF_00380">
    <property type="entry name" value="IHF_alpha"/>
    <property type="match status" value="1"/>
</dbReference>
<dbReference type="InterPro" id="IPR000119">
    <property type="entry name" value="Hist_DNA-bd"/>
</dbReference>
<dbReference type="InterPro" id="IPR020816">
    <property type="entry name" value="Histone-like_DNA-bd_CS"/>
</dbReference>
<dbReference type="InterPro" id="IPR010992">
    <property type="entry name" value="IHF-like_DNA-bd_dom_sf"/>
</dbReference>
<dbReference type="InterPro" id="IPR005684">
    <property type="entry name" value="IHF_alpha"/>
</dbReference>
<dbReference type="NCBIfam" id="TIGR00987">
    <property type="entry name" value="himA"/>
    <property type="match status" value="1"/>
</dbReference>
<dbReference type="NCBIfam" id="NF001401">
    <property type="entry name" value="PRK00285.1"/>
    <property type="match status" value="1"/>
</dbReference>
<dbReference type="PANTHER" id="PTHR33175">
    <property type="entry name" value="DNA-BINDING PROTEIN HU"/>
    <property type="match status" value="1"/>
</dbReference>
<dbReference type="PANTHER" id="PTHR33175:SF2">
    <property type="entry name" value="INTEGRATION HOST FACTOR SUBUNIT ALPHA"/>
    <property type="match status" value="1"/>
</dbReference>
<dbReference type="Pfam" id="PF00216">
    <property type="entry name" value="Bac_DNA_binding"/>
    <property type="match status" value="1"/>
</dbReference>
<dbReference type="PRINTS" id="PR01727">
    <property type="entry name" value="DNABINDINGHU"/>
</dbReference>
<dbReference type="SMART" id="SM00411">
    <property type="entry name" value="BHL"/>
    <property type="match status" value="1"/>
</dbReference>
<dbReference type="SUPFAM" id="SSF47729">
    <property type="entry name" value="IHF-like DNA-binding proteins"/>
    <property type="match status" value="1"/>
</dbReference>
<dbReference type="PROSITE" id="PS00045">
    <property type="entry name" value="HISTONE_LIKE"/>
    <property type="match status" value="1"/>
</dbReference>
<name>IHFA_BRUMB</name>
<reference key="1">
    <citation type="submission" date="2009-03" db="EMBL/GenBank/DDBJ databases">
        <title>Brucella melitensis ATCC 23457 whole genome shotgun sequencing project.</title>
        <authorList>
            <person name="Setubal J.C."/>
            <person name="Boyle S."/>
            <person name="Crasta O.R."/>
            <person name="Gillespie J.J."/>
            <person name="Kenyon R.W."/>
            <person name="Lu J."/>
            <person name="Mane S."/>
            <person name="Nagrani S."/>
            <person name="Shallom J.M."/>
            <person name="Shallom S."/>
            <person name="Shukla M."/>
            <person name="Snyder E.E."/>
            <person name="Sobral B.W."/>
            <person name="Wattam A.R."/>
            <person name="Will R."/>
            <person name="Williams K."/>
            <person name="Yoo H."/>
            <person name="Munk C."/>
            <person name="Tapia R."/>
            <person name="Han C."/>
            <person name="Detter J.C."/>
            <person name="Bruce D."/>
            <person name="Brettin T.S."/>
        </authorList>
    </citation>
    <scope>NUCLEOTIDE SEQUENCE [LARGE SCALE GENOMIC DNA]</scope>
    <source>
        <strain>ATCC 23457</strain>
    </source>
</reference>
<proteinExistence type="inferred from homology"/>
<evidence type="ECO:0000255" key="1">
    <source>
        <dbReference type="HAMAP-Rule" id="MF_00380"/>
    </source>
</evidence>
<comment type="function">
    <text evidence="1">This protein is one of the two subunits of integration host factor, a specific DNA-binding protein that functions in genetic recombination as well as in transcriptional and translational control.</text>
</comment>
<comment type="subunit">
    <text evidence="1">Heterodimer of an alpha and a beta chain.</text>
</comment>
<comment type="similarity">
    <text evidence="1">Belongs to the bacterial histone-like protein family.</text>
</comment>
<sequence>MGGKTVTRADLAEAVYRKVGLSRTESAALVEMILDEVCDAIVNGETVKLSSFATFQVRDKNERIGRNPKTGEEVPILPRRVMTFKASNVLKQRILQEHQKRQGKTSK</sequence>